<comment type="function">
    <text evidence="1">Catalyzes the transfer of a dimethylallyl group onto the adenine at position 37 in tRNAs that read codons beginning with uridine, leading to the formation of N6-(dimethylallyl)adenosine (i(6)A).</text>
</comment>
<comment type="catalytic activity">
    <reaction evidence="1">
        <text>adenosine(37) in tRNA + dimethylallyl diphosphate = N(6)-dimethylallyladenosine(37) in tRNA + diphosphate</text>
        <dbReference type="Rhea" id="RHEA:26482"/>
        <dbReference type="Rhea" id="RHEA-COMP:10162"/>
        <dbReference type="Rhea" id="RHEA-COMP:10375"/>
        <dbReference type="ChEBI" id="CHEBI:33019"/>
        <dbReference type="ChEBI" id="CHEBI:57623"/>
        <dbReference type="ChEBI" id="CHEBI:74411"/>
        <dbReference type="ChEBI" id="CHEBI:74415"/>
        <dbReference type="EC" id="2.5.1.75"/>
    </reaction>
</comment>
<comment type="cofactor">
    <cofactor evidence="1">
        <name>Mg(2+)</name>
        <dbReference type="ChEBI" id="CHEBI:18420"/>
    </cofactor>
</comment>
<comment type="subunit">
    <text evidence="1">Monomer.</text>
</comment>
<comment type="similarity">
    <text evidence="1">Belongs to the IPP transferase family.</text>
</comment>
<dbReference type="EC" id="2.5.1.75" evidence="1"/>
<dbReference type="EMBL" id="AP009493">
    <property type="protein sequence ID" value="BAG18558.1"/>
    <property type="molecule type" value="Genomic_DNA"/>
</dbReference>
<dbReference type="RefSeq" id="WP_012378741.1">
    <property type="nucleotide sequence ID" value="NC_010572.1"/>
</dbReference>
<dbReference type="SMR" id="B1VXU2"/>
<dbReference type="KEGG" id="sgr:SGR_1729"/>
<dbReference type="PATRIC" id="fig|455632.4.peg.1756"/>
<dbReference type="eggNOG" id="COG0324">
    <property type="taxonomic scope" value="Bacteria"/>
</dbReference>
<dbReference type="HOGENOM" id="CLU_032616_0_1_11"/>
<dbReference type="Proteomes" id="UP000001685">
    <property type="component" value="Chromosome"/>
</dbReference>
<dbReference type="GO" id="GO:0005524">
    <property type="term" value="F:ATP binding"/>
    <property type="evidence" value="ECO:0007669"/>
    <property type="project" value="UniProtKB-UniRule"/>
</dbReference>
<dbReference type="GO" id="GO:0052381">
    <property type="term" value="F:tRNA dimethylallyltransferase activity"/>
    <property type="evidence" value="ECO:0007669"/>
    <property type="project" value="UniProtKB-UniRule"/>
</dbReference>
<dbReference type="GO" id="GO:0006400">
    <property type="term" value="P:tRNA modification"/>
    <property type="evidence" value="ECO:0007669"/>
    <property type="project" value="TreeGrafter"/>
</dbReference>
<dbReference type="FunFam" id="1.10.20.140:FF:000001">
    <property type="entry name" value="tRNA dimethylallyltransferase"/>
    <property type="match status" value="1"/>
</dbReference>
<dbReference type="Gene3D" id="1.10.20.140">
    <property type="match status" value="1"/>
</dbReference>
<dbReference type="Gene3D" id="3.40.50.300">
    <property type="entry name" value="P-loop containing nucleotide triphosphate hydrolases"/>
    <property type="match status" value="1"/>
</dbReference>
<dbReference type="HAMAP" id="MF_00185">
    <property type="entry name" value="IPP_trans"/>
    <property type="match status" value="1"/>
</dbReference>
<dbReference type="InterPro" id="IPR039657">
    <property type="entry name" value="Dimethylallyltransferase"/>
</dbReference>
<dbReference type="InterPro" id="IPR018022">
    <property type="entry name" value="IPT"/>
</dbReference>
<dbReference type="InterPro" id="IPR027417">
    <property type="entry name" value="P-loop_NTPase"/>
</dbReference>
<dbReference type="NCBIfam" id="TIGR00174">
    <property type="entry name" value="miaA"/>
    <property type="match status" value="1"/>
</dbReference>
<dbReference type="PANTHER" id="PTHR11088">
    <property type="entry name" value="TRNA DIMETHYLALLYLTRANSFERASE"/>
    <property type="match status" value="1"/>
</dbReference>
<dbReference type="PANTHER" id="PTHR11088:SF60">
    <property type="entry name" value="TRNA DIMETHYLALLYLTRANSFERASE"/>
    <property type="match status" value="1"/>
</dbReference>
<dbReference type="Pfam" id="PF01715">
    <property type="entry name" value="IPPT"/>
    <property type="match status" value="1"/>
</dbReference>
<dbReference type="SUPFAM" id="SSF52540">
    <property type="entry name" value="P-loop containing nucleoside triphosphate hydrolases"/>
    <property type="match status" value="1"/>
</dbReference>
<protein>
    <recommendedName>
        <fullName evidence="1">tRNA dimethylallyltransferase</fullName>
        <ecNumber evidence="1">2.5.1.75</ecNumber>
    </recommendedName>
    <alternativeName>
        <fullName evidence="1">Dimethylallyl diphosphate:tRNA dimethylallyltransferase</fullName>
        <shortName evidence="1">DMAPP:tRNA dimethylallyltransferase</shortName>
        <shortName evidence="1">DMATase</shortName>
    </alternativeName>
    <alternativeName>
        <fullName evidence="1">Isopentenyl-diphosphate:tRNA isopentenyltransferase</fullName>
        <shortName evidence="1">IPP transferase</shortName>
        <shortName evidence="1">IPPT</shortName>
        <shortName evidence="1">IPTase</shortName>
    </alternativeName>
</protein>
<feature type="chain" id="PRO_1000098689" description="tRNA dimethylallyltransferase">
    <location>
        <begin position="1"/>
        <end position="312"/>
    </location>
</feature>
<feature type="region of interest" description="Interaction with substrate tRNA" evidence="1">
    <location>
        <begin position="40"/>
        <end position="43"/>
    </location>
</feature>
<feature type="binding site" evidence="1">
    <location>
        <begin position="15"/>
        <end position="22"/>
    </location>
    <ligand>
        <name>ATP</name>
        <dbReference type="ChEBI" id="CHEBI:30616"/>
    </ligand>
</feature>
<feature type="binding site" evidence="1">
    <location>
        <begin position="17"/>
        <end position="22"/>
    </location>
    <ligand>
        <name>substrate</name>
    </ligand>
</feature>
<feature type="site" description="Interaction with substrate tRNA" evidence="1">
    <location>
        <position position="106"/>
    </location>
</feature>
<feature type="site" description="Interaction with substrate tRNA" evidence="1">
    <location>
        <position position="127"/>
    </location>
</feature>
<keyword id="KW-0067">ATP-binding</keyword>
<keyword id="KW-0460">Magnesium</keyword>
<keyword id="KW-0547">Nucleotide-binding</keyword>
<keyword id="KW-0808">Transferase</keyword>
<keyword id="KW-0819">tRNA processing</keyword>
<reference key="1">
    <citation type="journal article" date="2008" name="J. Bacteriol.">
        <title>Genome sequence of the streptomycin-producing microorganism Streptomyces griseus IFO 13350.</title>
        <authorList>
            <person name="Ohnishi Y."/>
            <person name="Ishikawa J."/>
            <person name="Hara H."/>
            <person name="Suzuki H."/>
            <person name="Ikenoya M."/>
            <person name="Ikeda H."/>
            <person name="Yamashita A."/>
            <person name="Hattori M."/>
            <person name="Horinouchi S."/>
        </authorList>
    </citation>
    <scope>NUCLEOTIDE SEQUENCE [LARGE SCALE GENOMIC DNA]</scope>
    <source>
        <strain>JCM 4626 / CBS 651.72 / NBRC 13350 / KCC S-0626 / ISP 5235</strain>
    </source>
</reference>
<accession>B1VXU2</accession>
<evidence type="ECO:0000255" key="1">
    <source>
        <dbReference type="HAMAP-Rule" id="MF_00185"/>
    </source>
</evidence>
<name>MIAA_STRGG</name>
<organism>
    <name type="scientific">Streptomyces griseus subsp. griseus (strain JCM 4626 / CBS 651.72 / NBRC 13350 / KCC S-0626 / ISP 5235)</name>
    <dbReference type="NCBI Taxonomy" id="455632"/>
    <lineage>
        <taxon>Bacteria</taxon>
        <taxon>Bacillati</taxon>
        <taxon>Actinomycetota</taxon>
        <taxon>Actinomycetes</taxon>
        <taxon>Kitasatosporales</taxon>
        <taxon>Streptomycetaceae</taxon>
        <taxon>Streptomyces</taxon>
    </lineage>
</organism>
<sequence>MTPPASAPRVITVVGPTAAGKSDLGVFLAQRLGGEVINADSMQLYRGMDIGTAKLTLPEREGVPHRLLDIWDVTETASVAEYQRLARREIDRLLAEGRTPILVGGSGLYVKGAIDALEFPGTDPEVRARLEAELAERGSGVLHERLAAADPDAARSILASNGRRIVRALEVIEITGKPFTANLPGDEPVYDAVQIGVDVERPELDERIARRVDRMWDAGLVDEVRALEAAGLREGLTASRALGYQQILAVLAGECTEDDARAETVRATKRFARRQDSWFRRDARVVWLGGGHRDRGELPHRALTLVERAVTA</sequence>
<gene>
    <name evidence="1" type="primary">miaA</name>
    <name type="ordered locus">SGR_1729</name>
</gene>
<proteinExistence type="inferred from homology"/>